<sequence>MTKYIIITGGVLSSVGKGTVAASIGLLLKNRGYKITMVKVDPYLNVDAGTMNPYMHGEVFVTDDGAETDLDLGHYERFVGINMYSYNNITAGKVYFEVIKNERQGKYLGQTVQIIPHVTDQIKSMIRYASNMANADITIVEIGGTVGDIEGLPFLEAVRQLKLEEEEGNVVFVHVALVEFLKVTEEIKTKPLQHSVQELRRIGIQPDIIVARSVVPLDEETKKKIALFTNVKPEYIFSNYDVNMTYEVPLILEKQGLASKILSKLNLPDNQPNLSEWIRFIDNLKTADKEVKIALVGKYTKLKDSYISIKEAIYHAAAKLHIKPVLVWIESTDIENSKEAIDKLKSVDGIIVLPGFGSRGVEGKILAIKYARENNVPFLGICYGMQLAVVEFARNVLGLEKAHTTEVDPNTPHPVITLLDEQKKVVQIGGTMRLGSQKVIVKEGTLAYRIYGNIEVYERHRHRYEVNPEYVDLLQKGGLVISGVSENGLVEMIELKNHKFFLGLQGHPEYKSRPLAPSPVFIGFLRAAAGV</sequence>
<comment type="function">
    <text evidence="1">Catalyzes the ATP-dependent amination of UTP to CTP with either L-glutamine or ammonia as the source of nitrogen. Regulates intracellular CTP levels through interactions with the four ribonucleotide triphosphates.</text>
</comment>
<comment type="catalytic activity">
    <reaction evidence="1">
        <text>UTP + L-glutamine + ATP + H2O = CTP + L-glutamate + ADP + phosphate + 2 H(+)</text>
        <dbReference type="Rhea" id="RHEA:26426"/>
        <dbReference type="ChEBI" id="CHEBI:15377"/>
        <dbReference type="ChEBI" id="CHEBI:15378"/>
        <dbReference type="ChEBI" id="CHEBI:29985"/>
        <dbReference type="ChEBI" id="CHEBI:30616"/>
        <dbReference type="ChEBI" id="CHEBI:37563"/>
        <dbReference type="ChEBI" id="CHEBI:43474"/>
        <dbReference type="ChEBI" id="CHEBI:46398"/>
        <dbReference type="ChEBI" id="CHEBI:58359"/>
        <dbReference type="ChEBI" id="CHEBI:456216"/>
        <dbReference type="EC" id="6.3.4.2"/>
    </reaction>
</comment>
<comment type="catalytic activity">
    <reaction evidence="1">
        <text>L-glutamine + H2O = L-glutamate + NH4(+)</text>
        <dbReference type="Rhea" id="RHEA:15889"/>
        <dbReference type="ChEBI" id="CHEBI:15377"/>
        <dbReference type="ChEBI" id="CHEBI:28938"/>
        <dbReference type="ChEBI" id="CHEBI:29985"/>
        <dbReference type="ChEBI" id="CHEBI:58359"/>
    </reaction>
</comment>
<comment type="catalytic activity">
    <reaction evidence="1">
        <text>UTP + NH4(+) + ATP = CTP + ADP + phosphate + 2 H(+)</text>
        <dbReference type="Rhea" id="RHEA:16597"/>
        <dbReference type="ChEBI" id="CHEBI:15378"/>
        <dbReference type="ChEBI" id="CHEBI:28938"/>
        <dbReference type="ChEBI" id="CHEBI:30616"/>
        <dbReference type="ChEBI" id="CHEBI:37563"/>
        <dbReference type="ChEBI" id="CHEBI:43474"/>
        <dbReference type="ChEBI" id="CHEBI:46398"/>
        <dbReference type="ChEBI" id="CHEBI:456216"/>
    </reaction>
</comment>
<comment type="activity regulation">
    <text evidence="1">Allosterically activated by GTP, when glutamine is the substrate; GTP has no effect on the reaction when ammonia is the substrate. The allosteric effector GTP functions by stabilizing the protein conformation that binds the tetrahedral intermediate(s) formed during glutamine hydrolysis. Inhibited by the product CTP, via allosteric rather than competitive inhibition.</text>
</comment>
<comment type="pathway">
    <text evidence="1">Pyrimidine metabolism; CTP biosynthesis via de novo pathway; CTP from UDP: step 2/2.</text>
</comment>
<comment type="subunit">
    <text evidence="1">Homotetramer.</text>
</comment>
<comment type="miscellaneous">
    <text evidence="1">CTPSs have evolved a hybrid strategy for distinguishing between UTP and CTP. The overlapping regions of the product feedback inhibitory and substrate sites recognize a common feature in both compounds, the triphosphate moiety. To differentiate isosteric substrate and product pyrimidine rings, an additional pocket far from the expected kinase/ligase catalytic site, specifically recognizes the cytosine and ribose portions of the product inhibitor.</text>
</comment>
<comment type="similarity">
    <text evidence="1">Belongs to the CTP synthase family.</text>
</comment>
<dbReference type="EC" id="6.3.4.2" evidence="1"/>
<dbReference type="EMBL" id="BA000023">
    <property type="protein sequence ID" value="BAK54206.2"/>
    <property type="molecule type" value="Genomic_DNA"/>
</dbReference>
<dbReference type="RefSeq" id="WP_010978180.1">
    <property type="nucleotide sequence ID" value="NC_003106.2"/>
</dbReference>
<dbReference type="SMR" id="Q976E9"/>
<dbReference type="STRING" id="273063.STK_02370"/>
<dbReference type="MEROPS" id="C26.964"/>
<dbReference type="GeneID" id="1458128"/>
<dbReference type="KEGG" id="sto:STK_02370"/>
<dbReference type="PATRIC" id="fig|273063.9.peg.283"/>
<dbReference type="eggNOG" id="arCOG00063">
    <property type="taxonomic scope" value="Archaea"/>
</dbReference>
<dbReference type="OrthoDB" id="52769at2157"/>
<dbReference type="UniPathway" id="UPA00159">
    <property type="reaction ID" value="UER00277"/>
</dbReference>
<dbReference type="Proteomes" id="UP000001015">
    <property type="component" value="Chromosome"/>
</dbReference>
<dbReference type="GO" id="GO:0005524">
    <property type="term" value="F:ATP binding"/>
    <property type="evidence" value="ECO:0007669"/>
    <property type="project" value="UniProtKB-KW"/>
</dbReference>
<dbReference type="GO" id="GO:0003883">
    <property type="term" value="F:CTP synthase activity"/>
    <property type="evidence" value="ECO:0007669"/>
    <property type="project" value="UniProtKB-UniRule"/>
</dbReference>
<dbReference type="GO" id="GO:0004359">
    <property type="term" value="F:glutaminase activity"/>
    <property type="evidence" value="ECO:0007669"/>
    <property type="project" value="RHEA"/>
</dbReference>
<dbReference type="GO" id="GO:0042802">
    <property type="term" value="F:identical protein binding"/>
    <property type="evidence" value="ECO:0007669"/>
    <property type="project" value="TreeGrafter"/>
</dbReference>
<dbReference type="GO" id="GO:0046872">
    <property type="term" value="F:metal ion binding"/>
    <property type="evidence" value="ECO:0007669"/>
    <property type="project" value="UniProtKB-KW"/>
</dbReference>
<dbReference type="GO" id="GO:0044210">
    <property type="term" value="P:'de novo' CTP biosynthetic process"/>
    <property type="evidence" value="ECO:0007669"/>
    <property type="project" value="UniProtKB-UniRule"/>
</dbReference>
<dbReference type="GO" id="GO:0019856">
    <property type="term" value="P:pyrimidine nucleobase biosynthetic process"/>
    <property type="evidence" value="ECO:0007669"/>
    <property type="project" value="TreeGrafter"/>
</dbReference>
<dbReference type="CDD" id="cd03113">
    <property type="entry name" value="CTPS_N"/>
    <property type="match status" value="1"/>
</dbReference>
<dbReference type="CDD" id="cd01746">
    <property type="entry name" value="GATase1_CTP_Synthase"/>
    <property type="match status" value="1"/>
</dbReference>
<dbReference type="FunFam" id="3.40.50.300:FF:000009">
    <property type="entry name" value="CTP synthase"/>
    <property type="match status" value="1"/>
</dbReference>
<dbReference type="FunFam" id="3.40.50.880:FF:000002">
    <property type="entry name" value="CTP synthase"/>
    <property type="match status" value="1"/>
</dbReference>
<dbReference type="Gene3D" id="3.40.50.880">
    <property type="match status" value="1"/>
</dbReference>
<dbReference type="Gene3D" id="3.40.50.300">
    <property type="entry name" value="P-loop containing nucleotide triphosphate hydrolases"/>
    <property type="match status" value="1"/>
</dbReference>
<dbReference type="HAMAP" id="MF_01227">
    <property type="entry name" value="PyrG"/>
    <property type="match status" value="1"/>
</dbReference>
<dbReference type="InterPro" id="IPR029062">
    <property type="entry name" value="Class_I_gatase-like"/>
</dbReference>
<dbReference type="InterPro" id="IPR004468">
    <property type="entry name" value="CTP_synthase"/>
</dbReference>
<dbReference type="InterPro" id="IPR017456">
    <property type="entry name" value="CTP_synthase_N"/>
</dbReference>
<dbReference type="InterPro" id="IPR017926">
    <property type="entry name" value="GATASE"/>
</dbReference>
<dbReference type="InterPro" id="IPR033828">
    <property type="entry name" value="GATase1_CTP_Synthase"/>
</dbReference>
<dbReference type="InterPro" id="IPR027417">
    <property type="entry name" value="P-loop_NTPase"/>
</dbReference>
<dbReference type="NCBIfam" id="NF003792">
    <property type="entry name" value="PRK05380.1"/>
    <property type="match status" value="1"/>
</dbReference>
<dbReference type="NCBIfam" id="TIGR00337">
    <property type="entry name" value="PyrG"/>
    <property type="match status" value="1"/>
</dbReference>
<dbReference type="PANTHER" id="PTHR11550">
    <property type="entry name" value="CTP SYNTHASE"/>
    <property type="match status" value="1"/>
</dbReference>
<dbReference type="PANTHER" id="PTHR11550:SF0">
    <property type="entry name" value="CTP SYNTHASE-RELATED"/>
    <property type="match status" value="1"/>
</dbReference>
<dbReference type="Pfam" id="PF06418">
    <property type="entry name" value="CTP_synth_N"/>
    <property type="match status" value="1"/>
</dbReference>
<dbReference type="Pfam" id="PF00117">
    <property type="entry name" value="GATase"/>
    <property type="match status" value="1"/>
</dbReference>
<dbReference type="SUPFAM" id="SSF52317">
    <property type="entry name" value="Class I glutamine amidotransferase-like"/>
    <property type="match status" value="1"/>
</dbReference>
<dbReference type="SUPFAM" id="SSF52540">
    <property type="entry name" value="P-loop containing nucleoside triphosphate hydrolases"/>
    <property type="match status" value="1"/>
</dbReference>
<dbReference type="PROSITE" id="PS51273">
    <property type="entry name" value="GATASE_TYPE_1"/>
    <property type="match status" value="1"/>
</dbReference>
<gene>
    <name evidence="1" type="primary">pyrG</name>
    <name type="ordered locus">STK_02370</name>
</gene>
<accession>Q976E9</accession>
<accession>F9VMR0</accession>
<feature type="chain" id="PRO_0000138271" description="CTP synthase">
    <location>
        <begin position="1"/>
        <end position="531"/>
    </location>
</feature>
<feature type="domain" description="Glutamine amidotransferase type-1" evidence="1">
    <location>
        <begin position="292"/>
        <end position="531"/>
    </location>
</feature>
<feature type="region of interest" description="Amidoligase domain" evidence="1">
    <location>
        <begin position="1"/>
        <end position="267"/>
    </location>
</feature>
<feature type="active site" description="Nucleophile; for glutamine hydrolysis" evidence="1">
    <location>
        <position position="382"/>
    </location>
</feature>
<feature type="active site" evidence="1">
    <location>
        <position position="507"/>
    </location>
</feature>
<feature type="active site" evidence="1">
    <location>
        <position position="509"/>
    </location>
</feature>
<feature type="binding site" evidence="1">
    <location>
        <position position="13"/>
    </location>
    <ligand>
        <name>CTP</name>
        <dbReference type="ChEBI" id="CHEBI:37563"/>
        <note>allosteric inhibitor</note>
    </ligand>
</feature>
<feature type="binding site" evidence="1">
    <location>
        <position position="13"/>
    </location>
    <ligand>
        <name>UTP</name>
        <dbReference type="ChEBI" id="CHEBI:46398"/>
    </ligand>
</feature>
<feature type="binding site" evidence="1">
    <location>
        <begin position="14"/>
        <end position="19"/>
    </location>
    <ligand>
        <name>ATP</name>
        <dbReference type="ChEBI" id="CHEBI:30616"/>
    </ligand>
</feature>
<feature type="binding site" evidence="1">
    <location>
        <position position="54"/>
    </location>
    <ligand>
        <name>L-glutamine</name>
        <dbReference type="ChEBI" id="CHEBI:58359"/>
    </ligand>
</feature>
<feature type="binding site" evidence="1">
    <location>
        <position position="71"/>
    </location>
    <ligand>
        <name>ATP</name>
        <dbReference type="ChEBI" id="CHEBI:30616"/>
    </ligand>
</feature>
<feature type="binding site" evidence="1">
    <location>
        <position position="71"/>
    </location>
    <ligand>
        <name>Mg(2+)</name>
        <dbReference type="ChEBI" id="CHEBI:18420"/>
    </ligand>
</feature>
<feature type="binding site" evidence="1">
    <location>
        <position position="141"/>
    </location>
    <ligand>
        <name>Mg(2+)</name>
        <dbReference type="ChEBI" id="CHEBI:18420"/>
    </ligand>
</feature>
<feature type="binding site" evidence="1">
    <location>
        <begin position="148"/>
        <end position="150"/>
    </location>
    <ligand>
        <name>CTP</name>
        <dbReference type="ChEBI" id="CHEBI:37563"/>
        <note>allosteric inhibitor</note>
    </ligand>
</feature>
<feature type="binding site" evidence="1">
    <location>
        <begin position="188"/>
        <end position="193"/>
    </location>
    <ligand>
        <name>CTP</name>
        <dbReference type="ChEBI" id="CHEBI:37563"/>
        <note>allosteric inhibitor</note>
    </ligand>
</feature>
<feature type="binding site" evidence="1">
    <location>
        <begin position="188"/>
        <end position="193"/>
    </location>
    <ligand>
        <name>UTP</name>
        <dbReference type="ChEBI" id="CHEBI:46398"/>
    </ligand>
</feature>
<feature type="binding site" evidence="1">
    <location>
        <position position="224"/>
    </location>
    <ligand>
        <name>CTP</name>
        <dbReference type="ChEBI" id="CHEBI:37563"/>
        <note>allosteric inhibitor</note>
    </ligand>
</feature>
<feature type="binding site" evidence="1">
    <location>
        <position position="224"/>
    </location>
    <ligand>
        <name>UTP</name>
        <dbReference type="ChEBI" id="CHEBI:46398"/>
    </ligand>
</feature>
<feature type="binding site" evidence="1">
    <location>
        <position position="355"/>
    </location>
    <ligand>
        <name>L-glutamine</name>
        <dbReference type="ChEBI" id="CHEBI:58359"/>
    </ligand>
</feature>
<feature type="binding site" evidence="1">
    <location>
        <begin position="383"/>
        <end position="386"/>
    </location>
    <ligand>
        <name>L-glutamine</name>
        <dbReference type="ChEBI" id="CHEBI:58359"/>
    </ligand>
</feature>
<feature type="binding site" evidence="1">
    <location>
        <position position="406"/>
    </location>
    <ligand>
        <name>L-glutamine</name>
        <dbReference type="ChEBI" id="CHEBI:58359"/>
    </ligand>
</feature>
<feature type="binding site" evidence="1">
    <location>
        <position position="463"/>
    </location>
    <ligand>
        <name>L-glutamine</name>
        <dbReference type="ChEBI" id="CHEBI:58359"/>
    </ligand>
</feature>
<reference key="1">
    <citation type="journal article" date="2001" name="DNA Res.">
        <title>Complete genome sequence of an aerobic thermoacidophilic Crenarchaeon, Sulfolobus tokodaii strain7.</title>
        <authorList>
            <person name="Kawarabayasi Y."/>
            <person name="Hino Y."/>
            <person name="Horikawa H."/>
            <person name="Jin-no K."/>
            <person name="Takahashi M."/>
            <person name="Sekine M."/>
            <person name="Baba S."/>
            <person name="Ankai A."/>
            <person name="Kosugi H."/>
            <person name="Hosoyama A."/>
            <person name="Fukui S."/>
            <person name="Nagai Y."/>
            <person name="Nishijima K."/>
            <person name="Otsuka R."/>
            <person name="Nakazawa H."/>
            <person name="Takamiya M."/>
            <person name="Kato Y."/>
            <person name="Yoshizawa T."/>
            <person name="Tanaka T."/>
            <person name="Kudoh Y."/>
            <person name="Yamazaki J."/>
            <person name="Kushida N."/>
            <person name="Oguchi A."/>
            <person name="Aoki K."/>
            <person name="Masuda S."/>
            <person name="Yanagii M."/>
            <person name="Nishimura M."/>
            <person name="Yamagishi A."/>
            <person name="Oshima T."/>
            <person name="Kikuchi H."/>
        </authorList>
    </citation>
    <scope>NUCLEOTIDE SEQUENCE [LARGE SCALE GENOMIC DNA]</scope>
    <source>
        <strain>DSM 16993 / JCM 10545 / NBRC 100140 / 7</strain>
    </source>
</reference>
<proteinExistence type="inferred from homology"/>
<keyword id="KW-0067">ATP-binding</keyword>
<keyword id="KW-0315">Glutamine amidotransferase</keyword>
<keyword id="KW-0436">Ligase</keyword>
<keyword id="KW-0460">Magnesium</keyword>
<keyword id="KW-0479">Metal-binding</keyword>
<keyword id="KW-0547">Nucleotide-binding</keyword>
<keyword id="KW-0665">Pyrimidine biosynthesis</keyword>
<keyword id="KW-1185">Reference proteome</keyword>
<name>PYRG_SULTO</name>
<evidence type="ECO:0000255" key="1">
    <source>
        <dbReference type="HAMAP-Rule" id="MF_01227"/>
    </source>
</evidence>
<organism>
    <name type="scientific">Sulfurisphaera tokodaii (strain DSM 16993 / JCM 10545 / NBRC 100140 / 7)</name>
    <name type="common">Sulfolobus tokodaii</name>
    <dbReference type="NCBI Taxonomy" id="273063"/>
    <lineage>
        <taxon>Archaea</taxon>
        <taxon>Thermoproteota</taxon>
        <taxon>Thermoprotei</taxon>
        <taxon>Sulfolobales</taxon>
        <taxon>Sulfolobaceae</taxon>
        <taxon>Sulfurisphaera</taxon>
    </lineage>
</organism>
<protein>
    <recommendedName>
        <fullName evidence="1">CTP synthase</fullName>
        <ecNumber evidence="1">6.3.4.2</ecNumber>
    </recommendedName>
    <alternativeName>
        <fullName evidence="1">Cytidine 5'-triphosphate synthase</fullName>
    </alternativeName>
    <alternativeName>
        <fullName evidence="1">Cytidine triphosphate synthetase</fullName>
        <shortName evidence="1">CTP synthetase</shortName>
        <shortName evidence="1">CTPS</shortName>
    </alternativeName>
    <alternativeName>
        <fullName evidence="1">UTP--ammonia ligase</fullName>
    </alternativeName>
</protein>